<dbReference type="EC" id="2.7.7.-" evidence="4"/>
<dbReference type="EMBL" id="BC072806">
    <property type="protein sequence ID" value="AAH72806.1"/>
    <property type="molecule type" value="mRNA"/>
</dbReference>
<dbReference type="RefSeq" id="NP_001085465.1">
    <property type="nucleotide sequence ID" value="NM_001091996.1"/>
</dbReference>
<dbReference type="SMR" id="Q6GQD9"/>
<dbReference type="DNASU" id="443891"/>
<dbReference type="GeneID" id="443891"/>
<dbReference type="KEGG" id="xla:443891"/>
<dbReference type="AGR" id="Xenbase:XB-GENE-1001182"/>
<dbReference type="CTD" id="443891"/>
<dbReference type="Xenbase" id="XB-GENE-1001182">
    <property type="gene designation" value="mab21l1.L"/>
</dbReference>
<dbReference type="OMA" id="RESIYMK"/>
<dbReference type="OrthoDB" id="5961151at2759"/>
<dbReference type="Proteomes" id="UP000186698">
    <property type="component" value="Chromosome 2L"/>
</dbReference>
<dbReference type="Bgee" id="443891">
    <property type="expression patterns" value="Expressed in camera-type eye and 13 other cell types or tissues"/>
</dbReference>
<dbReference type="GO" id="GO:0005634">
    <property type="term" value="C:nucleus"/>
    <property type="evidence" value="ECO:0007669"/>
    <property type="project" value="UniProtKB-SubCell"/>
</dbReference>
<dbReference type="GO" id="GO:0046872">
    <property type="term" value="F:metal ion binding"/>
    <property type="evidence" value="ECO:0007669"/>
    <property type="project" value="UniProtKB-KW"/>
</dbReference>
<dbReference type="GO" id="GO:0000166">
    <property type="term" value="F:nucleotide binding"/>
    <property type="evidence" value="ECO:0007669"/>
    <property type="project" value="UniProtKB-KW"/>
</dbReference>
<dbReference type="GO" id="GO:0016779">
    <property type="term" value="F:nucleotidyltransferase activity"/>
    <property type="evidence" value="ECO:0007669"/>
    <property type="project" value="UniProtKB-KW"/>
</dbReference>
<dbReference type="FunFam" id="1.10.1410.40:FF:000002">
    <property type="entry name" value="protein mab-21-like 1"/>
    <property type="match status" value="1"/>
</dbReference>
<dbReference type="FunFam" id="3.30.460.90:FF:000001">
    <property type="entry name" value="protein mab-21-like 2"/>
    <property type="match status" value="1"/>
</dbReference>
<dbReference type="Gene3D" id="1.10.1410.40">
    <property type="match status" value="1"/>
</dbReference>
<dbReference type="Gene3D" id="3.30.460.90">
    <property type="match status" value="1"/>
</dbReference>
<dbReference type="InterPro" id="IPR046903">
    <property type="entry name" value="Mab-21-like_nuc_Trfase"/>
</dbReference>
<dbReference type="InterPro" id="IPR046906">
    <property type="entry name" value="Mab-21_HhH/H2TH-like"/>
</dbReference>
<dbReference type="InterPro" id="IPR024810">
    <property type="entry name" value="MAB21L/cGLR"/>
</dbReference>
<dbReference type="PANTHER" id="PTHR10656">
    <property type="entry name" value="CELL FATE DETERMINING PROTEIN MAB21-RELATED"/>
    <property type="match status" value="1"/>
</dbReference>
<dbReference type="PANTHER" id="PTHR10656:SF38">
    <property type="entry name" value="NUCLEOTIDYLTRANSFERASE MAB21L1-RELATED"/>
    <property type="match status" value="1"/>
</dbReference>
<dbReference type="Pfam" id="PF03281">
    <property type="entry name" value="Mab-21"/>
    <property type="match status" value="1"/>
</dbReference>
<dbReference type="Pfam" id="PF20266">
    <property type="entry name" value="Mab-21_C"/>
    <property type="match status" value="1"/>
</dbReference>
<dbReference type="SMART" id="SM01265">
    <property type="entry name" value="Mab-21"/>
    <property type="match status" value="1"/>
</dbReference>
<evidence type="ECO:0000250" key="1">
    <source>
        <dbReference type="UniProtKB" id="O70299"/>
    </source>
</evidence>
<evidence type="ECO:0000250" key="2">
    <source>
        <dbReference type="UniProtKB" id="Q13394"/>
    </source>
</evidence>
<evidence type="ECO:0000250" key="3">
    <source>
        <dbReference type="UniProtKB" id="Q8N884"/>
    </source>
</evidence>
<evidence type="ECO:0000305" key="4"/>
<sequence length="359" mass="40954">MVAAQAKLVYHLNKYYNEKCQARKAAISKSIREVCKVVSDVLKEVEVQEPRFISSLNEMDNRYEGLEVISPTEFEVVLYLNQMGVFNFVDDGSLPGCAVLKLSDGRKRSMSLWVEFITASGYLSARKIRSRFQTLVAQAVDKCSYRDVVKMVADTSEVKLRIRERYVVQITPAFKCTGIWPRSAAHWPLPHIPWPGPNRVAEVKAEGFNLLSKECHTLAGKQSSAESDAWVLQFAEAENRLQLGGCRKKCLSLLKTLRDRHLELPGQPLNNYHMKTLVSYECEKHPRESDWDESCLGDRLNGILLQLISCLQCRRCPHYFLPNLDLFQGKPHSALENAAKQTWRLAREILTNPKSLEKL</sequence>
<accession>Q6GQD9</accession>
<protein>
    <recommendedName>
        <fullName>Putative nucleotidyltransferase MAB21L1</fullName>
        <ecNumber evidence="4">2.7.7.-</ecNumber>
    </recommendedName>
    <alternativeName>
        <fullName>Protein mab-21-like 1</fullName>
    </alternativeName>
</protein>
<name>MB211_XENLA</name>
<organism>
    <name type="scientific">Xenopus laevis</name>
    <name type="common">African clawed frog</name>
    <dbReference type="NCBI Taxonomy" id="8355"/>
    <lineage>
        <taxon>Eukaryota</taxon>
        <taxon>Metazoa</taxon>
        <taxon>Chordata</taxon>
        <taxon>Craniata</taxon>
        <taxon>Vertebrata</taxon>
        <taxon>Euteleostomi</taxon>
        <taxon>Amphibia</taxon>
        <taxon>Batrachia</taxon>
        <taxon>Anura</taxon>
        <taxon>Pipoidea</taxon>
        <taxon>Pipidae</taxon>
        <taxon>Xenopodinae</taxon>
        <taxon>Xenopus</taxon>
        <taxon>Xenopus</taxon>
    </lineage>
</organism>
<keyword id="KW-0217">Developmental protein</keyword>
<keyword id="KW-0460">Magnesium</keyword>
<keyword id="KW-0479">Metal-binding</keyword>
<keyword id="KW-0547">Nucleotide-binding</keyword>
<keyword id="KW-0548">Nucleotidyltransferase</keyword>
<keyword id="KW-0539">Nucleus</keyword>
<keyword id="KW-1185">Reference proteome</keyword>
<keyword id="KW-0808">Transferase</keyword>
<feature type="chain" id="PRO_0000312785" description="Putative nucleotidyltransferase MAB21L1">
    <location>
        <begin position="1"/>
        <end position="359"/>
    </location>
</feature>
<feature type="binding site" evidence="2">
    <location>
        <begin position="23"/>
        <end position="24"/>
    </location>
    <ligand>
        <name>a ribonucleoside 5'-triphosphate</name>
        <dbReference type="ChEBI" id="CHEBI:61557"/>
    </ligand>
</feature>
<feature type="binding site" evidence="2">
    <location>
        <begin position="63"/>
        <end position="66"/>
    </location>
    <ligand>
        <name>a ribonucleoside 5'-triphosphate</name>
        <dbReference type="ChEBI" id="CHEBI:61557"/>
    </ligand>
</feature>
<feature type="binding site" evidence="3">
    <location>
        <position position="73"/>
    </location>
    <ligand>
        <name>Mg(2+)</name>
        <dbReference type="ChEBI" id="CHEBI:18420"/>
        <note>catalytic</note>
    </ligand>
</feature>
<feature type="binding site" evidence="3">
    <location>
        <position position="75"/>
    </location>
    <ligand>
        <name>Mg(2+)</name>
        <dbReference type="ChEBI" id="CHEBI:18420"/>
        <note>catalytic</note>
    </ligand>
</feature>
<feature type="binding site" evidence="2">
    <location>
        <position position="248"/>
    </location>
    <ligand>
        <name>a ribonucleoside 5'-triphosphate</name>
        <dbReference type="ChEBI" id="CHEBI:61557"/>
    </ligand>
</feature>
<feature type="binding site" evidence="2">
    <location>
        <begin position="252"/>
        <end position="255"/>
    </location>
    <ligand>
        <name>a ribonucleoside 5'-triphosphate</name>
        <dbReference type="ChEBI" id="CHEBI:61557"/>
    </ligand>
</feature>
<comment type="function">
    <text evidence="1 2">Putative nucleotidyltransferase required for several aspects of embryonic development including normal development of the eye (By similarity). It is unclear whether it displays nucleotidyltransferase activity in vivo. Binds single-stranded RNA (ssRNA) (By similarity).</text>
</comment>
<comment type="subunit">
    <text evidence="2">Monomer. Homodecamer; composed of 2 back to back homopentamers. The protein may exist as monomer in solution and oiligomerizes upon ligand binding.</text>
</comment>
<comment type="subcellular location">
    <subcellularLocation>
        <location evidence="1">Nucleus</location>
    </subcellularLocation>
</comment>
<comment type="similarity">
    <text evidence="4">Belongs to the mab-21 family.</text>
</comment>
<reference key="1">
    <citation type="submission" date="2004-06" db="EMBL/GenBank/DDBJ databases">
        <authorList>
            <consortium name="NIH - Xenopus Gene Collection (XGC) project"/>
        </authorList>
    </citation>
    <scope>NUCLEOTIDE SEQUENCE [LARGE SCALE MRNA]</scope>
    <source>
        <tissue>Embryo</tissue>
    </source>
</reference>
<gene>
    <name type="primary">mab21l1</name>
</gene>
<proteinExistence type="evidence at transcript level"/>